<geneLocation type="chloroplast"/>
<gene>
    <name evidence="1" type="primary">chlB</name>
</gene>
<comment type="function">
    <text evidence="1">Component of the dark-operative protochlorophyllide reductase (DPOR) that uses Mg-ATP and reduced ferredoxin to reduce ring D of protochlorophyllide (Pchlide) to form chlorophyllide a (Chlide). This reaction is light-independent. The NB-protein (ChlN-ChlB) is the catalytic component of the complex.</text>
</comment>
<comment type="catalytic activity">
    <reaction evidence="1">
        <text>chlorophyllide a + oxidized 2[4Fe-4S]-[ferredoxin] + 2 ADP + 2 phosphate = protochlorophyllide a + reduced 2[4Fe-4S]-[ferredoxin] + 2 ATP + 2 H2O</text>
        <dbReference type="Rhea" id="RHEA:28202"/>
        <dbReference type="Rhea" id="RHEA-COMP:10002"/>
        <dbReference type="Rhea" id="RHEA-COMP:10004"/>
        <dbReference type="ChEBI" id="CHEBI:15377"/>
        <dbReference type="ChEBI" id="CHEBI:30616"/>
        <dbReference type="ChEBI" id="CHEBI:33722"/>
        <dbReference type="ChEBI" id="CHEBI:33723"/>
        <dbReference type="ChEBI" id="CHEBI:43474"/>
        <dbReference type="ChEBI" id="CHEBI:83348"/>
        <dbReference type="ChEBI" id="CHEBI:83350"/>
        <dbReference type="ChEBI" id="CHEBI:456216"/>
        <dbReference type="EC" id="1.3.7.7"/>
    </reaction>
</comment>
<comment type="cofactor">
    <cofactor evidence="1">
        <name>[4Fe-4S] cluster</name>
        <dbReference type="ChEBI" id="CHEBI:49883"/>
    </cofactor>
    <text evidence="1">Binds 1 [4Fe-4S] cluster per heterodimer. The cluster is bound at the heterodimer interface by residues from both subunits.</text>
</comment>
<comment type="pathway">
    <text evidence="1">Porphyrin-containing compound metabolism; chlorophyll biosynthesis (light-independent).</text>
</comment>
<comment type="subunit">
    <text evidence="1">Protochlorophyllide reductase is composed of three subunits; ChlL, ChlN and ChlB. Forms a heterotetramer of two ChlB and two ChlN subunits.</text>
</comment>
<comment type="subcellular location">
    <subcellularLocation>
        <location>Plastid</location>
        <location>Chloroplast</location>
    </subcellularLocation>
</comment>
<comment type="similarity">
    <text evidence="1">Belongs to the ChlB/BchB/BchZ family.</text>
</comment>
<keyword id="KW-0004">4Fe-4S</keyword>
<keyword id="KW-0067">ATP-binding</keyword>
<keyword id="KW-0149">Chlorophyll biosynthesis</keyword>
<keyword id="KW-0150">Chloroplast</keyword>
<keyword id="KW-0408">Iron</keyword>
<keyword id="KW-0411">Iron-sulfur</keyword>
<keyword id="KW-0479">Metal-binding</keyword>
<keyword id="KW-0547">Nucleotide-binding</keyword>
<keyword id="KW-0560">Oxidoreductase</keyword>
<keyword id="KW-0602">Photosynthesis</keyword>
<keyword id="KW-0934">Plastid</keyword>
<name>CHLB_ANGEV</name>
<dbReference type="EC" id="1.3.7.7" evidence="1"/>
<dbReference type="EMBL" id="DQ821119">
    <property type="protein sequence ID" value="ABG79579.1"/>
    <property type="molecule type" value="Genomic_DNA"/>
</dbReference>
<dbReference type="RefSeq" id="YP_001023680.1">
    <property type="nucleotide sequence ID" value="NC_008829.1"/>
</dbReference>
<dbReference type="SMR" id="A2T312"/>
<dbReference type="GeneID" id="4788218"/>
<dbReference type="UniPathway" id="UPA00670"/>
<dbReference type="GO" id="GO:0009507">
    <property type="term" value="C:chloroplast"/>
    <property type="evidence" value="ECO:0007669"/>
    <property type="project" value="UniProtKB-SubCell"/>
</dbReference>
<dbReference type="GO" id="GO:0051539">
    <property type="term" value="F:4 iron, 4 sulfur cluster binding"/>
    <property type="evidence" value="ECO:0007669"/>
    <property type="project" value="UniProtKB-UniRule"/>
</dbReference>
<dbReference type="GO" id="GO:0005524">
    <property type="term" value="F:ATP binding"/>
    <property type="evidence" value="ECO:0007669"/>
    <property type="project" value="UniProtKB-UniRule"/>
</dbReference>
<dbReference type="GO" id="GO:0046872">
    <property type="term" value="F:metal ion binding"/>
    <property type="evidence" value="ECO:0007669"/>
    <property type="project" value="UniProtKB-KW"/>
</dbReference>
<dbReference type="GO" id="GO:0016730">
    <property type="term" value="F:oxidoreductase activity, acting on iron-sulfur proteins as donors"/>
    <property type="evidence" value="ECO:0007669"/>
    <property type="project" value="InterPro"/>
</dbReference>
<dbReference type="GO" id="GO:0016636">
    <property type="term" value="F:oxidoreductase activity, acting on the CH-CH group of donors, iron-sulfur protein as acceptor"/>
    <property type="evidence" value="ECO:0007669"/>
    <property type="project" value="UniProtKB-UniRule"/>
</dbReference>
<dbReference type="GO" id="GO:0036068">
    <property type="term" value="P:light-independent chlorophyll biosynthetic process"/>
    <property type="evidence" value="ECO:0007669"/>
    <property type="project" value="UniProtKB-UniRule"/>
</dbReference>
<dbReference type="GO" id="GO:0019685">
    <property type="term" value="P:photosynthesis, dark reaction"/>
    <property type="evidence" value="ECO:0007669"/>
    <property type="project" value="InterPro"/>
</dbReference>
<dbReference type="CDD" id="cd01981">
    <property type="entry name" value="Pchlide_reductase_B"/>
    <property type="match status" value="1"/>
</dbReference>
<dbReference type="Gene3D" id="1.20.89.20">
    <property type="match status" value="1"/>
</dbReference>
<dbReference type="Gene3D" id="3.40.50.1980">
    <property type="entry name" value="Nitrogenase molybdenum iron protein domain"/>
    <property type="match status" value="3"/>
</dbReference>
<dbReference type="Gene3D" id="1.10.8.550">
    <property type="entry name" value="Proto-chlorophyllide reductase 57 kD subunit B"/>
    <property type="match status" value="1"/>
</dbReference>
<dbReference type="HAMAP" id="MF_00353">
    <property type="entry name" value="ChlB_BchB"/>
    <property type="match status" value="1"/>
</dbReference>
<dbReference type="InterPro" id="IPR050152">
    <property type="entry name" value="ChlB/BchB/BchZ"/>
</dbReference>
<dbReference type="InterPro" id="IPR013580">
    <property type="entry name" value="LI-POR_suB-like_C"/>
</dbReference>
<dbReference type="InterPro" id="IPR000510">
    <property type="entry name" value="Nase/OxRdtase_comp1"/>
</dbReference>
<dbReference type="InterPro" id="IPR042298">
    <property type="entry name" value="P-CP_red_C"/>
</dbReference>
<dbReference type="InterPro" id="IPR005969">
    <property type="entry name" value="Protochl_reductB"/>
</dbReference>
<dbReference type="InterPro" id="IPR016209">
    <property type="entry name" value="Protochlorophyllide_Rdtase"/>
</dbReference>
<dbReference type="NCBIfam" id="TIGR01278">
    <property type="entry name" value="DPOR_BchB"/>
    <property type="match status" value="1"/>
</dbReference>
<dbReference type="PANTHER" id="PTHR33712">
    <property type="entry name" value="LIGHT-INDEPENDENT PROTOCHLOROPHYLLIDE REDUCTASE SUBUNIT B"/>
    <property type="match status" value="1"/>
</dbReference>
<dbReference type="PANTHER" id="PTHR33712:SF7">
    <property type="entry name" value="LIGHT-INDEPENDENT PROTOCHLOROPHYLLIDE REDUCTASE SUBUNIT B"/>
    <property type="match status" value="1"/>
</dbReference>
<dbReference type="Pfam" id="PF00148">
    <property type="entry name" value="Oxidored_nitro"/>
    <property type="match status" value="1"/>
</dbReference>
<dbReference type="Pfam" id="PF08369">
    <property type="entry name" value="PCP_red"/>
    <property type="match status" value="1"/>
</dbReference>
<dbReference type="PIRSF" id="PIRSF000163">
    <property type="entry name" value="PCP_ChlB"/>
    <property type="match status" value="1"/>
</dbReference>
<dbReference type="SUPFAM" id="SSF53807">
    <property type="entry name" value="Helical backbone' metal receptor"/>
    <property type="match status" value="1"/>
</dbReference>
<protein>
    <recommendedName>
        <fullName evidence="1">Light-independent protochlorophyllide reductase subunit B</fullName>
        <shortName evidence="1">DPOR subunit B</shortName>
        <shortName evidence="1">LI-POR subunit B</shortName>
        <ecNumber evidence="1">1.3.7.7</ecNumber>
    </recommendedName>
</protein>
<evidence type="ECO:0000255" key="1">
    <source>
        <dbReference type="HAMAP-Rule" id="MF_00353"/>
    </source>
</evidence>
<reference key="1">
    <citation type="journal article" date="2007" name="Am. Fern J.">
        <title>The complete plastid genome sequence of Angiopteris evecta (G. Forst.) Hoffm. (Marattiaceae).</title>
        <authorList>
            <person name="Roper J.M."/>
            <person name="Hansen S.K."/>
            <person name="Wolf P.G."/>
            <person name="Karol K.G."/>
            <person name="Mandoli D.F."/>
            <person name="Everett K.D.E."/>
            <person name="Kuehl J.V."/>
            <person name="Boore J.L."/>
        </authorList>
    </citation>
    <scope>NUCLEOTIDE SEQUENCE [LARGE SCALE GENOMIC DNA]</scope>
</reference>
<sequence>MKLAYWMYAGPAHIGTLRVASSFKNVHAIMHAPLGDDYFNVMRSMLERERDFTPVTASIVDRHVLARGSQEKVIDNITRKDKEQRPDLIVLTPTCTSSILQEDLQNFVARASISSDSDVILADVNHYRVNELQAADRTLEQIVRYFLNKARRQGVLTRSLTDTPSANIIGIFTLGFHNQHDCRELKRLLQDLGIKVNQVIPEGGSVEHLQDLPKAWFNIVPYREVGLMTAKYLEREFGMPYLSTTPMGIVDTAEFIRQMEKYVNSFLSKEKVNYESYINYQTQFVSQAAWFSRSIDCQNLTGKKVVVFGDATHAASITKILVREMGIHVGCAGTYCKHDAEWFNEQVQGFCDEALITEDHTEVADTIARIEPSAIFGTQMERHIGKRLEIPCGVISSPVHIQNFPLGYRPFLGYEGTNQIADSVYNSFTLGMEDHLLDIFGGHDTKEVITKSLSTETDLTWNPESQRELNKIPGFVRGKIKRNTEKFARQEGITTITVDVMYAAKEALST</sequence>
<proteinExistence type="inferred from homology"/>
<accession>A2T312</accession>
<organism>
    <name type="scientific">Angiopteris evecta</name>
    <name type="common">Mule's foot fern</name>
    <name type="synonym">Polypodium evectum</name>
    <dbReference type="NCBI Taxonomy" id="13825"/>
    <lineage>
        <taxon>Eukaryota</taxon>
        <taxon>Viridiplantae</taxon>
        <taxon>Streptophyta</taxon>
        <taxon>Embryophyta</taxon>
        <taxon>Tracheophyta</taxon>
        <taxon>Polypodiopsida</taxon>
        <taxon>Marattiidae</taxon>
        <taxon>Marattiales</taxon>
        <taxon>Marattiaceae</taxon>
        <taxon>Angiopteris</taxon>
    </lineage>
</organism>
<feature type="chain" id="PRO_0000324046" description="Light-independent protochlorophyllide reductase subunit B">
    <location>
        <begin position="1"/>
        <end position="510"/>
    </location>
</feature>
<feature type="active site" description="Proton donor" evidence="1">
    <location>
        <position position="296"/>
    </location>
</feature>
<feature type="binding site" evidence="1">
    <location>
        <position position="36"/>
    </location>
    <ligand>
        <name>[4Fe-4S] cluster</name>
        <dbReference type="ChEBI" id="CHEBI:49883"/>
        <note>ligand shared with heterodimeric partner</note>
    </ligand>
</feature>
<feature type="binding site" evidence="1">
    <location>
        <begin position="431"/>
        <end position="432"/>
    </location>
    <ligand>
        <name>substrate</name>
    </ligand>
</feature>